<feature type="signal peptide" evidence="2">
    <location>
        <begin position="1"/>
        <end position="30"/>
    </location>
</feature>
<feature type="chain" id="PRO_0000024841" description="Poly-beta-1,6-N-acetyl-D-glucosamine N-deacetylase">
    <location>
        <begin position="31"/>
        <end position="289"/>
    </location>
</feature>
<feature type="domain" description="NodB homology" evidence="3">
    <location>
        <begin position="113"/>
        <end position="289"/>
    </location>
</feature>
<dbReference type="EC" id="3.5.1.-"/>
<dbReference type="EMBL" id="U43366">
    <property type="protein sequence ID" value="AAC06118.1"/>
    <property type="molecule type" value="Genomic_DNA"/>
</dbReference>
<dbReference type="EMBL" id="CP000029">
    <property type="protein sequence ID" value="AAW53184.1"/>
    <property type="molecule type" value="Genomic_DNA"/>
</dbReference>
<dbReference type="PIR" id="S77609">
    <property type="entry name" value="S77609"/>
</dbReference>
<dbReference type="RefSeq" id="WP_002484506.1">
    <property type="nucleotide sequence ID" value="NC_002976.3"/>
</dbReference>
<dbReference type="SMR" id="Q5HKP8"/>
<dbReference type="STRING" id="176279.SERP2295"/>
<dbReference type="KEGG" id="ser:SERP2295"/>
<dbReference type="eggNOG" id="COG0726">
    <property type="taxonomic scope" value="Bacteria"/>
</dbReference>
<dbReference type="HOGENOM" id="CLU_030024_3_2_9"/>
<dbReference type="Proteomes" id="UP000000531">
    <property type="component" value="Chromosome"/>
</dbReference>
<dbReference type="GO" id="GO:0005576">
    <property type="term" value="C:extracellular region"/>
    <property type="evidence" value="ECO:0007669"/>
    <property type="project" value="UniProtKB-KW"/>
</dbReference>
<dbReference type="GO" id="GO:0016811">
    <property type="term" value="F:hydrolase activity, acting on carbon-nitrogen (but not peptide) bonds, in linear amides"/>
    <property type="evidence" value="ECO:0007669"/>
    <property type="project" value="InterPro"/>
</dbReference>
<dbReference type="GO" id="GO:0005975">
    <property type="term" value="P:carbohydrate metabolic process"/>
    <property type="evidence" value="ECO:0007669"/>
    <property type="project" value="InterPro"/>
</dbReference>
<dbReference type="CDD" id="cd10965">
    <property type="entry name" value="CE4_IcaB_5s"/>
    <property type="match status" value="1"/>
</dbReference>
<dbReference type="Gene3D" id="3.20.20.370">
    <property type="entry name" value="Glycoside hydrolase/deacetylase"/>
    <property type="match status" value="1"/>
</dbReference>
<dbReference type="InterPro" id="IPR011330">
    <property type="entry name" value="Glyco_hydro/deAcase_b/a-brl"/>
</dbReference>
<dbReference type="InterPro" id="IPR002509">
    <property type="entry name" value="NODB_dom"/>
</dbReference>
<dbReference type="InterPro" id="IPR023872">
    <property type="entry name" value="PNAG_deacetylase"/>
</dbReference>
<dbReference type="InterPro" id="IPR051398">
    <property type="entry name" value="Polysacch_Deacetylase"/>
</dbReference>
<dbReference type="NCBIfam" id="TIGR03933">
    <property type="entry name" value="PIA_icaB"/>
    <property type="match status" value="1"/>
</dbReference>
<dbReference type="PANTHER" id="PTHR34216">
    <property type="match status" value="1"/>
</dbReference>
<dbReference type="PANTHER" id="PTHR34216:SF3">
    <property type="entry name" value="POLY-BETA-1,6-N-ACETYL-D-GLUCOSAMINE N-DEACETYLASE"/>
    <property type="match status" value="1"/>
</dbReference>
<dbReference type="Pfam" id="PF01522">
    <property type="entry name" value="Polysacc_deac_1"/>
    <property type="match status" value="1"/>
</dbReference>
<dbReference type="SUPFAM" id="SSF88713">
    <property type="entry name" value="Glycoside hydrolase/deacetylase"/>
    <property type="match status" value="1"/>
</dbReference>
<dbReference type="PROSITE" id="PS51677">
    <property type="entry name" value="NODB"/>
    <property type="match status" value="1"/>
</dbReference>
<evidence type="ECO:0000250" key="1"/>
<evidence type="ECO:0000255" key="2"/>
<evidence type="ECO:0000255" key="3">
    <source>
        <dbReference type="PROSITE-ProRule" id="PRU01014"/>
    </source>
</evidence>
<evidence type="ECO:0000269" key="4">
    <source>
    </source>
</evidence>
<evidence type="ECO:0000305" key="5"/>
<sequence length="289" mass="33636">MKPFKLIFISALMILIMTNATPISHLNAQANEENKKLKYEKNSALALNYHRVRKKDPLNDFISLLSGSKEIKNYSVTDQEFKSQIQWLKAHDAKFLTLKEFIKYKEKGKFPKRSVWINFDDMDQTIYDNAFPVLKKYHIPATGFLITNHIGSTNFHNLNLLSKKQLDEMYETGLWDFESHTHDLHALKKGNKSKFLDSSQSVASKDIKKSEHYLNKNYPKNERALAYPYGLINDDKIKAMKKNGIQYGFTLQEKAVTPDADNYRIPRILVSNDAFETLIKEWDGFDEEK</sequence>
<protein>
    <recommendedName>
        <fullName>Poly-beta-1,6-N-acetyl-D-glucosamine N-deacetylase</fullName>
        <shortName>PNAG N-deacetylase</shortName>
        <shortName>Poly-beta-1,6-GlcNAc N-deacetylase</shortName>
        <ecNumber>3.5.1.-</ecNumber>
    </recommendedName>
    <alternativeName>
        <fullName>Biofilm polysaccharide intercellular adhesin deacetylase</fullName>
        <shortName>Biofilm PIA deacetylase</shortName>
    </alternativeName>
    <alternativeName>
        <fullName>Intercellular adhesion protein B</fullName>
    </alternativeName>
</protein>
<accession>Q5HKP8</accession>
<accession>Q54067</accession>
<organism>
    <name type="scientific">Staphylococcus epidermidis (strain ATCC 35984 / DSM 28319 / BCRC 17069 / CCUG 31568 / BM 3577 / RP62A)</name>
    <dbReference type="NCBI Taxonomy" id="176279"/>
    <lineage>
        <taxon>Bacteria</taxon>
        <taxon>Bacillati</taxon>
        <taxon>Bacillota</taxon>
        <taxon>Bacilli</taxon>
        <taxon>Bacillales</taxon>
        <taxon>Staphylococcaceae</taxon>
        <taxon>Staphylococcus</taxon>
    </lineage>
</organism>
<reference key="1">
    <citation type="journal article" date="1996" name="Mol. Microbiol.">
        <title>Molecular basis of intercellular adhesion in the biofilm-forming Staphylococcus epidermidis.</title>
        <authorList>
            <person name="Heilmann C."/>
            <person name="Schweitzer O."/>
            <person name="Gerke C."/>
            <person name="Vanittanakom N."/>
            <person name="Mack D."/>
            <person name="Goetz F."/>
        </authorList>
    </citation>
    <scope>NUCLEOTIDE SEQUENCE [GENOMIC DNA]</scope>
    <scope>ROLE IN BIOFILM FORMATION</scope>
    <scope>DISRUPTION PHENOTYPE</scope>
</reference>
<reference key="2">
    <citation type="journal article" date="2005" name="J. Bacteriol.">
        <title>Insights on evolution of virulence and resistance from the complete genome analysis of an early methicillin-resistant Staphylococcus aureus strain and a biofilm-producing methicillin-resistant Staphylococcus epidermidis strain.</title>
        <authorList>
            <person name="Gill S.R."/>
            <person name="Fouts D.E."/>
            <person name="Archer G.L."/>
            <person name="Mongodin E.F."/>
            <person name="DeBoy R.T."/>
            <person name="Ravel J."/>
            <person name="Paulsen I.T."/>
            <person name="Kolonay J.F."/>
            <person name="Brinkac L.M."/>
            <person name="Beanan M.J."/>
            <person name="Dodson R.J."/>
            <person name="Daugherty S.C."/>
            <person name="Madupu R."/>
            <person name="Angiuoli S.V."/>
            <person name="Durkin A.S."/>
            <person name="Haft D.H."/>
            <person name="Vamathevan J.J."/>
            <person name="Khouri H."/>
            <person name="Utterback T.R."/>
            <person name="Lee C."/>
            <person name="Dimitrov G."/>
            <person name="Jiang L."/>
            <person name="Qin H."/>
            <person name="Weidman J."/>
            <person name="Tran K."/>
            <person name="Kang K.H."/>
            <person name="Hance I.R."/>
            <person name="Nelson K.E."/>
            <person name="Fraser C.M."/>
        </authorList>
    </citation>
    <scope>NUCLEOTIDE SEQUENCE [LARGE SCALE GENOMIC DNA]</scope>
    <source>
        <strain>ATCC 35984 / DSM 28319 / BCRC 17069 / CCUG 31568 / BM 3577 / RP62A</strain>
    </source>
</reference>
<comment type="function">
    <text evidence="1">Catalyzes the N-deacetylation of poly-beta-1,6-N-acetyl-D-glucosamine (PNAG, also referred to as PIA), a biofilm adhesin polysaccharide. In fact, the IcaB deacetylase converts 15 to 20% of the GlcNAc residues of PNAG to glucosamine. N-deacetylation is crucial for attachment of the polysaccharide to the bacterial cell surface; it leads to the introduction of positive charges in the otherwise neutral PIA polymer, allowing electrostatic interactions. Deacetylation of the polymer is also essential for key virulence mechanisms of S.epidermidis, namely biofilm formation, colonization, and resistance to neutrophil phagocytosis and human antibacterial peptides (By similarity).</text>
</comment>
<comment type="subcellular location">
    <subcellularLocation>
        <location>Secreted</location>
        <location>Cell wall</location>
    </subcellularLocation>
    <text evidence="1">Attached to the cell surface.</text>
</comment>
<comment type="disruption phenotype">
    <text evidence="4">Complete loss of the intercellular adhesion phenotype.</text>
</comment>
<comment type="similarity">
    <text evidence="5">Belongs to the polysaccharide deacetylase family.</text>
</comment>
<proteinExistence type="inferred from homology"/>
<name>ICAB_STAEQ</name>
<gene>
    <name type="primary">icaB</name>
    <name type="ordered locus">SERP2295</name>
</gene>
<keyword id="KW-0134">Cell wall</keyword>
<keyword id="KW-0378">Hydrolase</keyword>
<keyword id="KW-1185">Reference proteome</keyword>
<keyword id="KW-0964">Secreted</keyword>
<keyword id="KW-0732">Signal</keyword>
<keyword id="KW-0843">Virulence</keyword>